<organism>
    <name type="scientific">Arabidopsis thaliana</name>
    <name type="common">Mouse-ear cress</name>
    <dbReference type="NCBI Taxonomy" id="3702"/>
    <lineage>
        <taxon>Eukaryota</taxon>
        <taxon>Viridiplantae</taxon>
        <taxon>Streptophyta</taxon>
        <taxon>Embryophyta</taxon>
        <taxon>Tracheophyta</taxon>
        <taxon>Spermatophyta</taxon>
        <taxon>Magnoliopsida</taxon>
        <taxon>eudicotyledons</taxon>
        <taxon>Gunneridae</taxon>
        <taxon>Pentapetalae</taxon>
        <taxon>rosids</taxon>
        <taxon>malvids</taxon>
        <taxon>Brassicales</taxon>
        <taxon>Brassicaceae</taxon>
        <taxon>Camelineae</taxon>
        <taxon>Arabidopsis</taxon>
    </lineage>
</organism>
<reference key="1">
    <citation type="journal article" date="2000" name="Nature">
        <title>Sequence and analysis of chromosome 1 of the plant Arabidopsis thaliana.</title>
        <authorList>
            <person name="Theologis A."/>
            <person name="Ecker J.R."/>
            <person name="Palm C.J."/>
            <person name="Federspiel N.A."/>
            <person name="Kaul S."/>
            <person name="White O."/>
            <person name="Alonso J."/>
            <person name="Altafi H."/>
            <person name="Araujo R."/>
            <person name="Bowman C.L."/>
            <person name="Brooks S.Y."/>
            <person name="Buehler E."/>
            <person name="Chan A."/>
            <person name="Chao Q."/>
            <person name="Chen H."/>
            <person name="Cheuk R.F."/>
            <person name="Chin C.W."/>
            <person name="Chung M.K."/>
            <person name="Conn L."/>
            <person name="Conway A.B."/>
            <person name="Conway A.R."/>
            <person name="Creasy T.H."/>
            <person name="Dewar K."/>
            <person name="Dunn P."/>
            <person name="Etgu P."/>
            <person name="Feldblyum T.V."/>
            <person name="Feng J.-D."/>
            <person name="Fong B."/>
            <person name="Fujii C.Y."/>
            <person name="Gill J.E."/>
            <person name="Goldsmith A.D."/>
            <person name="Haas B."/>
            <person name="Hansen N.F."/>
            <person name="Hughes B."/>
            <person name="Huizar L."/>
            <person name="Hunter J.L."/>
            <person name="Jenkins J."/>
            <person name="Johnson-Hopson C."/>
            <person name="Khan S."/>
            <person name="Khaykin E."/>
            <person name="Kim C.J."/>
            <person name="Koo H.L."/>
            <person name="Kremenetskaia I."/>
            <person name="Kurtz D.B."/>
            <person name="Kwan A."/>
            <person name="Lam B."/>
            <person name="Langin-Hooper S."/>
            <person name="Lee A."/>
            <person name="Lee J.M."/>
            <person name="Lenz C.A."/>
            <person name="Li J.H."/>
            <person name="Li Y.-P."/>
            <person name="Lin X."/>
            <person name="Liu S.X."/>
            <person name="Liu Z.A."/>
            <person name="Luros J.S."/>
            <person name="Maiti R."/>
            <person name="Marziali A."/>
            <person name="Militscher J."/>
            <person name="Miranda M."/>
            <person name="Nguyen M."/>
            <person name="Nierman W.C."/>
            <person name="Osborne B.I."/>
            <person name="Pai G."/>
            <person name="Peterson J."/>
            <person name="Pham P.K."/>
            <person name="Rizzo M."/>
            <person name="Rooney T."/>
            <person name="Rowley D."/>
            <person name="Sakano H."/>
            <person name="Salzberg S.L."/>
            <person name="Schwartz J.R."/>
            <person name="Shinn P."/>
            <person name="Southwick A.M."/>
            <person name="Sun H."/>
            <person name="Tallon L.J."/>
            <person name="Tambunga G."/>
            <person name="Toriumi M.J."/>
            <person name="Town C.D."/>
            <person name="Utterback T."/>
            <person name="Van Aken S."/>
            <person name="Vaysberg M."/>
            <person name="Vysotskaia V.S."/>
            <person name="Walker M."/>
            <person name="Wu D."/>
            <person name="Yu G."/>
            <person name="Fraser C.M."/>
            <person name="Venter J.C."/>
            <person name="Davis R.W."/>
        </authorList>
    </citation>
    <scope>NUCLEOTIDE SEQUENCE [LARGE SCALE GENOMIC DNA]</scope>
    <source>
        <strain>cv. Columbia</strain>
    </source>
</reference>
<reference key="2">
    <citation type="journal article" date="2017" name="Plant J.">
        <title>Araport11: a complete reannotation of the Arabidopsis thaliana reference genome.</title>
        <authorList>
            <person name="Cheng C.Y."/>
            <person name="Krishnakumar V."/>
            <person name="Chan A.P."/>
            <person name="Thibaud-Nissen F."/>
            <person name="Schobel S."/>
            <person name="Town C.D."/>
        </authorList>
    </citation>
    <scope>GENOME REANNOTATION</scope>
    <source>
        <strain>cv. Columbia</strain>
    </source>
</reference>
<reference key="3">
    <citation type="journal article" date="2002" name="J. Biol. Chem.">
        <title>Functional cloning and characterization of a plant efflux carrier for multidrug and heavy metal detoxification.</title>
        <authorList>
            <person name="Li L."/>
            <person name="He Z."/>
            <person name="Pandey G.K."/>
            <person name="Tsuchiya T."/>
            <person name="Luan S."/>
        </authorList>
    </citation>
    <scope>GENE FAMILY</scope>
    <scope>NOMENCLATURE</scope>
</reference>
<reference key="4">
    <citation type="journal article" date="2003" name="Eur. J. Biochem.">
        <title>The multidrug/oligosaccharidyl-lipid/polysaccharide (MOP) exporter superfamily.</title>
        <authorList>
            <person name="Hvorup R.N."/>
            <person name="Winnen B."/>
            <person name="Chang A.B."/>
            <person name="Jiang Y."/>
            <person name="Zhou X.F."/>
            <person name="Saier M.H. Jr."/>
        </authorList>
    </citation>
    <scope>GENE FAMILY</scope>
</reference>
<protein>
    <recommendedName>
        <fullName evidence="3">Protein DETOXIFICATION 32</fullName>
        <shortName evidence="3">AtDTX32</shortName>
    </recommendedName>
    <alternativeName>
        <fullName evidence="4">Multidrug and toxic compound extrusion protein 32</fullName>
        <shortName evidence="4">MATE protein 32</shortName>
    </alternativeName>
</protein>
<dbReference type="EMBL" id="AC005292">
    <property type="protein sequence ID" value="AAF87016.1"/>
    <property type="status" value="ALT_SEQ"/>
    <property type="molecule type" value="Genomic_DNA"/>
</dbReference>
<dbReference type="EMBL" id="CP002684">
    <property type="protein sequence ID" value="AEE30369.1"/>
    <property type="molecule type" value="Genomic_DNA"/>
</dbReference>
<dbReference type="PIR" id="A86367">
    <property type="entry name" value="A86367"/>
</dbReference>
<dbReference type="RefSeq" id="NP_173744.1">
    <property type="nucleotide sequence ID" value="NM_102179.2"/>
</dbReference>
<dbReference type="SMR" id="F4I4Q3"/>
<dbReference type="IntAct" id="F4I4Q3">
    <property type="interactions" value="3"/>
</dbReference>
<dbReference type="STRING" id="3702.F4I4Q3"/>
<dbReference type="iPTMnet" id="F4I4Q3"/>
<dbReference type="PaxDb" id="3702-AT1G23300.1"/>
<dbReference type="EnsemblPlants" id="AT1G23300.1">
    <property type="protein sequence ID" value="AT1G23300.1"/>
    <property type="gene ID" value="AT1G23300"/>
</dbReference>
<dbReference type="GeneID" id="838939"/>
<dbReference type="Gramene" id="AT1G23300.1">
    <property type="protein sequence ID" value="AT1G23300.1"/>
    <property type="gene ID" value="AT1G23300"/>
</dbReference>
<dbReference type="KEGG" id="ath:AT1G23300"/>
<dbReference type="Araport" id="AT1G23300"/>
<dbReference type="TAIR" id="AT1G23300"/>
<dbReference type="eggNOG" id="KOG1347">
    <property type="taxonomic scope" value="Eukaryota"/>
</dbReference>
<dbReference type="HOGENOM" id="CLU_012893_1_4_1"/>
<dbReference type="InParanoid" id="F4I4Q3"/>
<dbReference type="OMA" id="WPIMVAF"/>
<dbReference type="OrthoDB" id="2126698at2759"/>
<dbReference type="PRO" id="PR:F4I4Q3"/>
<dbReference type="Proteomes" id="UP000006548">
    <property type="component" value="Chromosome 1"/>
</dbReference>
<dbReference type="ExpressionAtlas" id="F4I4Q3">
    <property type="expression patterns" value="baseline and differential"/>
</dbReference>
<dbReference type="GO" id="GO:0016020">
    <property type="term" value="C:membrane"/>
    <property type="evidence" value="ECO:0007669"/>
    <property type="project" value="UniProtKB-SubCell"/>
</dbReference>
<dbReference type="GO" id="GO:0015297">
    <property type="term" value="F:antiporter activity"/>
    <property type="evidence" value="ECO:0007669"/>
    <property type="project" value="InterPro"/>
</dbReference>
<dbReference type="GO" id="GO:0042910">
    <property type="term" value="F:xenobiotic transmembrane transporter activity"/>
    <property type="evidence" value="ECO:0007669"/>
    <property type="project" value="InterPro"/>
</dbReference>
<dbReference type="GO" id="GO:1990961">
    <property type="term" value="P:xenobiotic detoxification by transmembrane export across the plasma membrane"/>
    <property type="evidence" value="ECO:0007669"/>
    <property type="project" value="InterPro"/>
</dbReference>
<dbReference type="CDD" id="cd13132">
    <property type="entry name" value="MATE_eukaryotic"/>
    <property type="match status" value="1"/>
</dbReference>
<dbReference type="InterPro" id="IPR045069">
    <property type="entry name" value="MATE_euk"/>
</dbReference>
<dbReference type="InterPro" id="IPR002528">
    <property type="entry name" value="MATE_fam"/>
</dbReference>
<dbReference type="NCBIfam" id="TIGR00797">
    <property type="entry name" value="matE"/>
    <property type="match status" value="1"/>
</dbReference>
<dbReference type="PANTHER" id="PTHR11206">
    <property type="entry name" value="MULTIDRUG RESISTANCE PROTEIN"/>
    <property type="match status" value="1"/>
</dbReference>
<dbReference type="Pfam" id="PF01554">
    <property type="entry name" value="MatE"/>
    <property type="match status" value="2"/>
</dbReference>
<sequence>METLNVDHEDTISSEQEHRAHTKSDTDMPPISGGRDFIRQFAAESKKLWWLAGPAIFTSFCQYSLGAVTQILAGHVNTLALAAVSIQNSVISGFSVGIMLGMGSALATLCGQAYGAGQLEMMGIYLQRSWIILNSCALLLCLFYVFATPLLSLLGQSPEISKAAGKFSLWMIPQLFAYAVNFATAKFLQAQSKVIAMAVIAATVLLQHTLLSWLLMLKLRWGMAGGAVVLNMSWWLIDVTQIVYICGGSSGRAWSGLSWMAFKNLRGFARLSLASAVMVCLEVWYFMALILFAGYLKNPQVSVAALSICMNILGWPIMVAFGFNAAVSVRESNELGAEHPRRAKFLLIVAMITSVSIGIVISVTLIVLRDKYPAMFSDDEEVRVLVKQLTPLLALTIVINNIQPVLSGVAVGAGWQGIVAYVNIGCYYLCGIPIGLVLGYKMELGVKGIWTGMLTGTVVQTSVLLFIIYRTNWKKEASLAEARIKKWGDQSNKREEIDLCEEDENNSNGENNHRK</sequence>
<gene>
    <name evidence="3" type="primary">DTX32</name>
    <name evidence="5" type="ordered locus">At1g23300</name>
    <name evidence="6" type="ORF">F26F24.14</name>
</gene>
<accession>F4I4Q3</accession>
<accession>Q9LR32</accession>
<evidence type="ECO:0000255" key="1"/>
<evidence type="ECO:0000256" key="2">
    <source>
        <dbReference type="SAM" id="MobiDB-lite"/>
    </source>
</evidence>
<evidence type="ECO:0000303" key="3">
    <source>
    </source>
</evidence>
<evidence type="ECO:0000305" key="4"/>
<evidence type="ECO:0000312" key="5">
    <source>
        <dbReference type="Araport" id="AT1G23300"/>
    </source>
</evidence>
<evidence type="ECO:0000312" key="6">
    <source>
        <dbReference type="EMBL" id="AAF87016.1"/>
    </source>
</evidence>
<proteinExistence type="inferred from homology"/>
<name>DTX32_ARATH</name>
<keyword id="KW-0472">Membrane</keyword>
<keyword id="KW-1185">Reference proteome</keyword>
<keyword id="KW-0812">Transmembrane</keyword>
<keyword id="KW-1133">Transmembrane helix</keyword>
<keyword id="KW-0813">Transport</keyword>
<comment type="subcellular location">
    <subcellularLocation>
        <location evidence="1">Membrane</location>
        <topology evidence="1">Multi-pass membrane protein</topology>
    </subcellularLocation>
</comment>
<comment type="similarity">
    <text evidence="4">Belongs to the multi antimicrobial extrusion (MATE) (TC 2.A.66.1) family.</text>
</comment>
<comment type="sequence caution" evidence="4">
    <conflict type="erroneous gene model prediction">
        <sequence resource="EMBL-CDS" id="AAF87016"/>
    </conflict>
</comment>
<feature type="chain" id="PRO_0000434073" description="Protein DETOXIFICATION 32">
    <location>
        <begin position="1"/>
        <end position="515"/>
    </location>
</feature>
<feature type="transmembrane region" description="Helical" evidence="1">
    <location>
        <begin position="48"/>
        <end position="68"/>
    </location>
</feature>
<feature type="transmembrane region" description="Helical" evidence="1">
    <location>
        <begin position="90"/>
        <end position="110"/>
    </location>
</feature>
<feature type="transmembrane region" description="Helical" evidence="1">
    <location>
        <begin position="131"/>
        <end position="151"/>
    </location>
</feature>
<feature type="transmembrane region" description="Helical" evidence="1">
    <location>
        <begin position="167"/>
        <end position="187"/>
    </location>
</feature>
<feature type="transmembrane region" description="Helical" evidence="1">
    <location>
        <begin position="194"/>
        <end position="214"/>
    </location>
</feature>
<feature type="transmembrane region" description="Helical" evidence="1">
    <location>
        <begin position="225"/>
        <end position="245"/>
    </location>
</feature>
<feature type="transmembrane region" description="Helical" evidence="1">
    <location>
        <begin position="276"/>
        <end position="296"/>
    </location>
</feature>
<feature type="transmembrane region" description="Helical" evidence="1">
    <location>
        <begin position="303"/>
        <end position="323"/>
    </location>
</feature>
<feature type="transmembrane region" description="Helical" evidence="1">
    <location>
        <begin position="347"/>
        <end position="367"/>
    </location>
</feature>
<feature type="transmembrane region" description="Helical" evidence="1">
    <location>
        <begin position="392"/>
        <end position="412"/>
    </location>
</feature>
<feature type="transmembrane region" description="Helical" evidence="1">
    <location>
        <begin position="418"/>
        <end position="438"/>
    </location>
</feature>
<feature type="transmembrane region" description="Helical" evidence="1">
    <location>
        <begin position="448"/>
        <end position="468"/>
    </location>
</feature>
<feature type="region of interest" description="Disordered" evidence="2">
    <location>
        <begin position="1"/>
        <end position="30"/>
    </location>
</feature>
<feature type="region of interest" description="Disordered" evidence="2">
    <location>
        <begin position="488"/>
        <end position="515"/>
    </location>
</feature>
<feature type="compositionally biased region" description="Basic and acidic residues" evidence="2">
    <location>
        <begin position="1"/>
        <end position="26"/>
    </location>
</feature>
<feature type="compositionally biased region" description="Basic and acidic residues" evidence="2">
    <location>
        <begin position="488"/>
        <end position="497"/>
    </location>
</feature>
<feature type="compositionally biased region" description="Low complexity" evidence="2">
    <location>
        <begin position="506"/>
        <end position="515"/>
    </location>
</feature>